<feature type="chain" id="PRO_0000082856" description="Peptide deformylase">
    <location>
        <begin position="1"/>
        <end position="204"/>
    </location>
</feature>
<feature type="active site" evidence="1">
    <location>
        <position position="175"/>
    </location>
</feature>
<feature type="binding site" evidence="1">
    <location>
        <position position="131"/>
    </location>
    <ligand>
        <name>Fe cation</name>
        <dbReference type="ChEBI" id="CHEBI:24875"/>
    </ligand>
</feature>
<feature type="binding site" evidence="1">
    <location>
        <position position="174"/>
    </location>
    <ligand>
        <name>Fe cation</name>
        <dbReference type="ChEBI" id="CHEBI:24875"/>
    </ligand>
</feature>
<feature type="binding site" evidence="1">
    <location>
        <position position="178"/>
    </location>
    <ligand>
        <name>Fe cation</name>
        <dbReference type="ChEBI" id="CHEBI:24875"/>
    </ligand>
</feature>
<feature type="helix" evidence="2">
    <location>
        <begin position="3"/>
        <end position="7"/>
    </location>
</feature>
<feature type="helix" evidence="2">
    <location>
        <begin position="25"/>
        <end position="27"/>
    </location>
</feature>
<feature type="helix" evidence="2">
    <location>
        <begin position="40"/>
        <end position="57"/>
    </location>
</feature>
<feature type="helix" evidence="2">
    <location>
        <begin position="59"/>
        <end position="65"/>
    </location>
</feature>
<feature type="strand" evidence="2">
    <location>
        <begin position="71"/>
        <end position="74"/>
    </location>
</feature>
<feature type="helix" evidence="2">
    <location>
        <begin position="75"/>
        <end position="78"/>
    </location>
</feature>
<feature type="strand" evidence="2">
    <location>
        <begin position="82"/>
        <end position="90"/>
    </location>
</feature>
<feature type="strand" evidence="2">
    <location>
        <begin position="101"/>
        <end position="118"/>
    </location>
</feature>
<feature type="strand" evidence="2">
    <location>
        <begin position="120"/>
        <end position="125"/>
    </location>
</feature>
<feature type="strand" evidence="2">
    <location>
        <begin position="144"/>
        <end position="146"/>
    </location>
</feature>
<feature type="strand" evidence="2">
    <location>
        <begin position="148"/>
        <end position="153"/>
    </location>
</feature>
<feature type="strand" evidence="2">
    <location>
        <begin position="159"/>
        <end position="164"/>
    </location>
</feature>
<feature type="helix" evidence="2">
    <location>
        <begin position="166"/>
        <end position="179"/>
    </location>
</feature>
<feature type="helix" evidence="2">
    <location>
        <begin position="184"/>
        <end position="187"/>
    </location>
</feature>
<feature type="strand" evidence="2">
    <location>
        <begin position="201"/>
        <end position="203"/>
    </location>
</feature>
<dbReference type="EC" id="3.5.1.88" evidence="1"/>
<dbReference type="EMBL" id="AE014133">
    <property type="protein sequence ID" value="AAN57921.1"/>
    <property type="molecule type" value="Genomic_DNA"/>
</dbReference>
<dbReference type="RefSeq" id="NP_720615.1">
    <property type="nucleotide sequence ID" value="NC_004350.2"/>
</dbReference>
<dbReference type="RefSeq" id="WP_002263599.1">
    <property type="nucleotide sequence ID" value="NC_004350.2"/>
</dbReference>
<dbReference type="PDB" id="3L87">
    <property type="method" value="X-ray"/>
    <property type="resolution" value="2.00 A"/>
    <property type="chains" value="A=1-204"/>
</dbReference>
<dbReference type="PDBsum" id="3L87"/>
<dbReference type="SMR" id="Q8DWC2"/>
<dbReference type="STRING" id="210007.SMU_143c"/>
<dbReference type="KEGG" id="smu:SMU_143c"/>
<dbReference type="PATRIC" id="fig|210007.7.peg.122"/>
<dbReference type="eggNOG" id="COG0242">
    <property type="taxonomic scope" value="Bacteria"/>
</dbReference>
<dbReference type="HOGENOM" id="CLU_061901_4_0_9"/>
<dbReference type="OrthoDB" id="9784988at2"/>
<dbReference type="PhylomeDB" id="Q8DWC2"/>
<dbReference type="EvolutionaryTrace" id="Q8DWC2"/>
<dbReference type="Proteomes" id="UP000002512">
    <property type="component" value="Chromosome"/>
</dbReference>
<dbReference type="GO" id="GO:0046872">
    <property type="term" value="F:metal ion binding"/>
    <property type="evidence" value="ECO:0007669"/>
    <property type="project" value="UniProtKB-KW"/>
</dbReference>
<dbReference type="GO" id="GO:0042586">
    <property type="term" value="F:peptide deformylase activity"/>
    <property type="evidence" value="ECO:0007669"/>
    <property type="project" value="UniProtKB-UniRule"/>
</dbReference>
<dbReference type="GO" id="GO:0043686">
    <property type="term" value="P:co-translational protein modification"/>
    <property type="evidence" value="ECO:0007669"/>
    <property type="project" value="TreeGrafter"/>
</dbReference>
<dbReference type="GO" id="GO:0006412">
    <property type="term" value="P:translation"/>
    <property type="evidence" value="ECO:0007669"/>
    <property type="project" value="UniProtKB-UniRule"/>
</dbReference>
<dbReference type="CDD" id="cd00487">
    <property type="entry name" value="Pep_deformylase"/>
    <property type="match status" value="1"/>
</dbReference>
<dbReference type="FunFam" id="3.90.45.10:FF:000002">
    <property type="entry name" value="Peptide deformylase"/>
    <property type="match status" value="1"/>
</dbReference>
<dbReference type="Gene3D" id="3.90.45.10">
    <property type="entry name" value="Peptide deformylase"/>
    <property type="match status" value="1"/>
</dbReference>
<dbReference type="HAMAP" id="MF_00163">
    <property type="entry name" value="Pep_deformylase"/>
    <property type="match status" value="1"/>
</dbReference>
<dbReference type="InterPro" id="IPR023635">
    <property type="entry name" value="Peptide_deformylase"/>
</dbReference>
<dbReference type="InterPro" id="IPR036821">
    <property type="entry name" value="Peptide_deformylase_sf"/>
</dbReference>
<dbReference type="NCBIfam" id="TIGR00079">
    <property type="entry name" value="pept_deformyl"/>
    <property type="match status" value="1"/>
</dbReference>
<dbReference type="PANTHER" id="PTHR10458">
    <property type="entry name" value="PEPTIDE DEFORMYLASE"/>
    <property type="match status" value="1"/>
</dbReference>
<dbReference type="PANTHER" id="PTHR10458:SF8">
    <property type="entry name" value="PEPTIDE DEFORMYLASE 2"/>
    <property type="match status" value="1"/>
</dbReference>
<dbReference type="Pfam" id="PF01327">
    <property type="entry name" value="Pep_deformylase"/>
    <property type="match status" value="1"/>
</dbReference>
<dbReference type="PIRSF" id="PIRSF004749">
    <property type="entry name" value="Pep_def"/>
    <property type="match status" value="1"/>
</dbReference>
<dbReference type="PRINTS" id="PR01576">
    <property type="entry name" value="PDEFORMYLASE"/>
</dbReference>
<dbReference type="SUPFAM" id="SSF56420">
    <property type="entry name" value="Peptide deformylase"/>
    <property type="match status" value="1"/>
</dbReference>
<protein>
    <recommendedName>
        <fullName evidence="1">Peptide deformylase</fullName>
        <shortName evidence="1">PDF</shortName>
        <ecNumber evidence="1">3.5.1.88</ecNumber>
    </recommendedName>
    <alternativeName>
        <fullName evidence="1">Polypeptide deformylase</fullName>
    </alternativeName>
</protein>
<comment type="function">
    <text evidence="1">Removes the formyl group from the N-terminal Met of newly synthesized proteins. Requires at least a dipeptide for an efficient rate of reaction. N-terminal L-methionine is a prerequisite for activity but the enzyme has broad specificity at other positions.</text>
</comment>
<comment type="catalytic activity">
    <reaction evidence="1">
        <text>N-terminal N-formyl-L-methionyl-[peptide] + H2O = N-terminal L-methionyl-[peptide] + formate</text>
        <dbReference type="Rhea" id="RHEA:24420"/>
        <dbReference type="Rhea" id="RHEA-COMP:10639"/>
        <dbReference type="Rhea" id="RHEA-COMP:10640"/>
        <dbReference type="ChEBI" id="CHEBI:15377"/>
        <dbReference type="ChEBI" id="CHEBI:15740"/>
        <dbReference type="ChEBI" id="CHEBI:49298"/>
        <dbReference type="ChEBI" id="CHEBI:64731"/>
        <dbReference type="EC" id="3.5.1.88"/>
    </reaction>
</comment>
<comment type="cofactor">
    <cofactor evidence="1">
        <name>Fe(2+)</name>
        <dbReference type="ChEBI" id="CHEBI:29033"/>
    </cofactor>
    <text evidence="1">Binds 1 Fe(2+) ion.</text>
</comment>
<comment type="similarity">
    <text evidence="1">Belongs to the polypeptide deformylase family.</text>
</comment>
<organism>
    <name type="scientific">Streptococcus mutans serotype c (strain ATCC 700610 / UA159)</name>
    <dbReference type="NCBI Taxonomy" id="210007"/>
    <lineage>
        <taxon>Bacteria</taxon>
        <taxon>Bacillati</taxon>
        <taxon>Bacillota</taxon>
        <taxon>Bacilli</taxon>
        <taxon>Lactobacillales</taxon>
        <taxon>Streptococcaceae</taxon>
        <taxon>Streptococcus</taxon>
    </lineage>
</organism>
<sequence>MSAIKTITKASHLIDMNDIIREGHPTLRAVAQDVTFPLNEDDIILGEKMLQFLKNSQDPVTAEKMELRGGVGLAAPQLDISKRIIAVLIPNPEDKDGNPPKEAYALKEVMYNPRIIAHSVQDAALADGEGCLSVDRVVEGYVIRHSRVTIEYYDKNSDKKKLKLKGYQSIVVQHEIDHTNGIMFFDRINEKNPFEIKEGLLLIE</sequence>
<accession>Q8DWC2</accession>
<gene>
    <name evidence="1" type="primary">def</name>
    <name type="ordered locus">SMU_143c</name>
</gene>
<evidence type="ECO:0000255" key="1">
    <source>
        <dbReference type="HAMAP-Rule" id="MF_00163"/>
    </source>
</evidence>
<evidence type="ECO:0007829" key="2">
    <source>
        <dbReference type="PDB" id="3L87"/>
    </source>
</evidence>
<name>DEF_STRMU</name>
<reference key="1">
    <citation type="journal article" date="2002" name="Proc. Natl. Acad. Sci. U.S.A.">
        <title>Genome sequence of Streptococcus mutans UA159, a cariogenic dental pathogen.</title>
        <authorList>
            <person name="Ajdic D.J."/>
            <person name="McShan W.M."/>
            <person name="McLaughlin R.E."/>
            <person name="Savic G."/>
            <person name="Chang J."/>
            <person name="Carson M.B."/>
            <person name="Primeaux C."/>
            <person name="Tian R."/>
            <person name="Kenton S."/>
            <person name="Jia H.G."/>
            <person name="Lin S.P."/>
            <person name="Qian Y."/>
            <person name="Li S."/>
            <person name="Zhu H."/>
            <person name="Najar F.Z."/>
            <person name="Lai H."/>
            <person name="White J."/>
            <person name="Roe B.A."/>
            <person name="Ferretti J.J."/>
        </authorList>
    </citation>
    <scope>NUCLEOTIDE SEQUENCE [LARGE SCALE GENOMIC DNA]</scope>
    <source>
        <strain>ATCC 700610 / UA159</strain>
    </source>
</reference>
<keyword id="KW-0002">3D-structure</keyword>
<keyword id="KW-0378">Hydrolase</keyword>
<keyword id="KW-0408">Iron</keyword>
<keyword id="KW-0479">Metal-binding</keyword>
<keyword id="KW-0648">Protein biosynthesis</keyword>
<keyword id="KW-1185">Reference proteome</keyword>
<proteinExistence type="evidence at protein level"/>